<comment type="function">
    <text evidence="1">Non-canonical ABC transporter that contains transmembrane domains (TMD), which form a pore in the inner membrane, and an ATP-binding domain (NBD), which is responsible for energy generation. Confers resistance against macrolides.</text>
</comment>
<comment type="subunit">
    <text evidence="1">Homodimer.</text>
</comment>
<comment type="subcellular location">
    <subcellularLocation>
        <location evidence="1">Cell inner membrane</location>
        <topology evidence="1">Multi-pass membrane protein</topology>
    </subcellularLocation>
</comment>
<comment type="similarity">
    <text evidence="1">Belongs to the ABC transporter superfamily. Macrolide exporter (TC 3.A.1.122) family.</text>
</comment>
<sequence>MIKLENIKKSFITGGVSSEVLKGINLEIKKGEFVAIIGQSGSGKSTLMNILGCLDTPTSGKYLLDSLDISKFKKDELSNLRLKKFGFIFQRYNLLSSNDTKSNVALPGIYAGMSKADRINRAKDILVKLGLETKFDTMPNHLSGGQQQRVSIARALMNGGEILLCDEPTGALDSSSGVMVMQILDSLHKDGHTIIVVTHDKDIAAWADRIIEIKDGNIISDTRKNSQIYELKQNLKEIKPSLKAIRDQFFESFVMSLGAIKSHKLRSFLTMLGIIIGIASVICVVALAKGSQQKILSDINNMGTNTITIFPGKGFGDMHSGRVRSLSIDDSNLLGKLDFVDFSTPRMNTSGLLTYANQSFSGSLRSGSEYSLAISGLKIEKGRDFTKDDIINSRSNIIIDQFTKDAFFKDVDPIGKVILFNKQPFTIVGLVKRDETSFSGDNLTVYAPYTTTMNKLTGDRDIRSIMLKLKDGVNAQVAEQSIIEVLKIRRGSKDFFTRNSDTIRQTIESTMNTMSLLISGIALISLMVGGIGVMNIMLVSVFERTKEIGIRMAIGAKSKDIMTQFLIEAILLCAIGGSIGIGLAYAIGYGFNVFGGDFKMIFSTASIFIALGVSSLIGIVFGYIPARNASKLNPIDALLRE</sequence>
<proteinExistence type="inferred from homology"/>
<organism>
    <name type="scientific">Campylobacter fetus subsp. fetus (strain 82-40)</name>
    <dbReference type="NCBI Taxonomy" id="360106"/>
    <lineage>
        <taxon>Bacteria</taxon>
        <taxon>Pseudomonadati</taxon>
        <taxon>Campylobacterota</taxon>
        <taxon>Epsilonproteobacteria</taxon>
        <taxon>Campylobacterales</taxon>
        <taxon>Campylobacteraceae</taxon>
        <taxon>Campylobacter</taxon>
    </lineage>
</organism>
<reference key="1">
    <citation type="submission" date="2006-11" db="EMBL/GenBank/DDBJ databases">
        <title>Sequence of Campylobacter fetus subsp. fetus 82-40.</title>
        <authorList>
            <person name="Fouts D.E."/>
            <person name="Nelson K.E."/>
        </authorList>
    </citation>
    <scope>NUCLEOTIDE SEQUENCE [LARGE SCALE GENOMIC DNA]</scope>
    <source>
        <strain>82-40</strain>
    </source>
</reference>
<gene>
    <name evidence="1" type="primary">macB</name>
    <name type="ordered locus">CFF8240_0759</name>
</gene>
<name>MACB_CAMFF</name>
<keyword id="KW-0046">Antibiotic resistance</keyword>
<keyword id="KW-0067">ATP-binding</keyword>
<keyword id="KW-0997">Cell inner membrane</keyword>
<keyword id="KW-1003">Cell membrane</keyword>
<keyword id="KW-0472">Membrane</keyword>
<keyword id="KW-0547">Nucleotide-binding</keyword>
<keyword id="KW-1278">Translocase</keyword>
<keyword id="KW-0812">Transmembrane</keyword>
<keyword id="KW-1133">Transmembrane helix</keyword>
<keyword id="KW-0813">Transport</keyword>
<feature type="chain" id="PRO_0000280164" description="Macrolide export ATP-binding/permease protein MacB">
    <location>
        <begin position="1"/>
        <end position="641"/>
    </location>
</feature>
<feature type="transmembrane region" description="Helical" evidence="1">
    <location>
        <begin position="268"/>
        <end position="288"/>
    </location>
</feature>
<feature type="transmembrane region" description="Helical" evidence="1">
    <location>
        <begin position="516"/>
        <end position="536"/>
    </location>
</feature>
<feature type="transmembrane region" description="Helical" evidence="1">
    <location>
        <begin position="565"/>
        <end position="585"/>
    </location>
</feature>
<feature type="transmembrane region" description="Helical" evidence="1">
    <location>
        <begin position="601"/>
        <end position="621"/>
    </location>
</feature>
<feature type="domain" description="ABC transporter" evidence="1">
    <location>
        <begin position="2"/>
        <end position="240"/>
    </location>
</feature>
<feature type="binding site" evidence="1">
    <location>
        <begin position="38"/>
        <end position="45"/>
    </location>
    <ligand>
        <name>ATP</name>
        <dbReference type="ChEBI" id="CHEBI:30616"/>
    </ligand>
</feature>
<accession>A0RP01</accession>
<protein>
    <recommendedName>
        <fullName evidence="1">Macrolide export ATP-binding/permease protein MacB</fullName>
        <ecNumber evidence="1">7.6.2.-</ecNumber>
    </recommendedName>
</protein>
<evidence type="ECO:0000255" key="1">
    <source>
        <dbReference type="HAMAP-Rule" id="MF_01720"/>
    </source>
</evidence>
<dbReference type="EC" id="7.6.2.-" evidence="1"/>
<dbReference type="EMBL" id="CP000487">
    <property type="protein sequence ID" value="ABK82901.1"/>
    <property type="molecule type" value="Genomic_DNA"/>
</dbReference>
<dbReference type="RefSeq" id="WP_002849183.1">
    <property type="nucleotide sequence ID" value="NC_008599.1"/>
</dbReference>
<dbReference type="SMR" id="A0RP01"/>
<dbReference type="KEGG" id="cff:CFF8240_0759"/>
<dbReference type="PATRIC" id="fig|360106.6.peg.733"/>
<dbReference type="eggNOG" id="COG0577">
    <property type="taxonomic scope" value="Bacteria"/>
</dbReference>
<dbReference type="eggNOG" id="COG1136">
    <property type="taxonomic scope" value="Bacteria"/>
</dbReference>
<dbReference type="HOGENOM" id="CLU_000604_78_1_7"/>
<dbReference type="Proteomes" id="UP000000760">
    <property type="component" value="Chromosome"/>
</dbReference>
<dbReference type="GO" id="GO:0005886">
    <property type="term" value="C:plasma membrane"/>
    <property type="evidence" value="ECO:0007669"/>
    <property type="project" value="UniProtKB-SubCell"/>
</dbReference>
<dbReference type="GO" id="GO:0005524">
    <property type="term" value="F:ATP binding"/>
    <property type="evidence" value="ECO:0007669"/>
    <property type="project" value="UniProtKB-KW"/>
</dbReference>
<dbReference type="GO" id="GO:0016887">
    <property type="term" value="F:ATP hydrolysis activity"/>
    <property type="evidence" value="ECO:0007669"/>
    <property type="project" value="InterPro"/>
</dbReference>
<dbReference type="GO" id="GO:0022857">
    <property type="term" value="F:transmembrane transporter activity"/>
    <property type="evidence" value="ECO:0007669"/>
    <property type="project" value="TreeGrafter"/>
</dbReference>
<dbReference type="GO" id="GO:0046677">
    <property type="term" value="P:response to antibiotic"/>
    <property type="evidence" value="ECO:0007669"/>
    <property type="project" value="UniProtKB-KW"/>
</dbReference>
<dbReference type="CDD" id="cd03255">
    <property type="entry name" value="ABC_MJ0796_LolCDE_FtsE"/>
    <property type="match status" value="1"/>
</dbReference>
<dbReference type="FunFam" id="3.40.50.300:FF:000032">
    <property type="entry name" value="Export ABC transporter ATP-binding protein"/>
    <property type="match status" value="1"/>
</dbReference>
<dbReference type="Gene3D" id="3.40.50.300">
    <property type="entry name" value="P-loop containing nucleotide triphosphate hydrolases"/>
    <property type="match status" value="1"/>
</dbReference>
<dbReference type="InterPro" id="IPR003593">
    <property type="entry name" value="AAA+_ATPase"/>
</dbReference>
<dbReference type="InterPro" id="IPR003838">
    <property type="entry name" value="ABC3_permease_C"/>
</dbReference>
<dbReference type="InterPro" id="IPR003439">
    <property type="entry name" value="ABC_transporter-like_ATP-bd"/>
</dbReference>
<dbReference type="InterPro" id="IPR017871">
    <property type="entry name" value="ABC_transporter-like_CS"/>
</dbReference>
<dbReference type="InterPro" id="IPR017911">
    <property type="entry name" value="MacB-like_ATP-bd"/>
</dbReference>
<dbReference type="InterPro" id="IPR025857">
    <property type="entry name" value="MacB_PCD"/>
</dbReference>
<dbReference type="InterPro" id="IPR050250">
    <property type="entry name" value="Macrolide_Exporter_MacB"/>
</dbReference>
<dbReference type="InterPro" id="IPR027417">
    <property type="entry name" value="P-loop_NTPase"/>
</dbReference>
<dbReference type="PANTHER" id="PTHR30572:SF14">
    <property type="entry name" value="MACROLIDE EXPORT ATP-BINDING_PERMEASE PROTEIN MACB"/>
    <property type="match status" value="1"/>
</dbReference>
<dbReference type="PANTHER" id="PTHR30572">
    <property type="entry name" value="MEMBRANE COMPONENT OF TRANSPORTER-RELATED"/>
    <property type="match status" value="1"/>
</dbReference>
<dbReference type="Pfam" id="PF00005">
    <property type="entry name" value="ABC_tran"/>
    <property type="match status" value="1"/>
</dbReference>
<dbReference type="Pfam" id="PF02687">
    <property type="entry name" value="FtsX"/>
    <property type="match status" value="1"/>
</dbReference>
<dbReference type="Pfam" id="PF12704">
    <property type="entry name" value="MacB_PCD"/>
    <property type="match status" value="1"/>
</dbReference>
<dbReference type="SMART" id="SM00382">
    <property type="entry name" value="AAA"/>
    <property type="match status" value="1"/>
</dbReference>
<dbReference type="SUPFAM" id="SSF52540">
    <property type="entry name" value="P-loop containing nucleoside triphosphate hydrolases"/>
    <property type="match status" value="1"/>
</dbReference>
<dbReference type="PROSITE" id="PS00211">
    <property type="entry name" value="ABC_TRANSPORTER_1"/>
    <property type="match status" value="1"/>
</dbReference>
<dbReference type="PROSITE" id="PS50893">
    <property type="entry name" value="ABC_TRANSPORTER_2"/>
    <property type="match status" value="1"/>
</dbReference>
<dbReference type="PROSITE" id="PS51267">
    <property type="entry name" value="MACB"/>
    <property type="match status" value="1"/>
</dbReference>